<gene>
    <name evidence="1" type="primary">tpiA</name>
    <name type="ordered locus">Sputcn32_2838</name>
</gene>
<name>TPIS_SHEPC</name>
<reference key="1">
    <citation type="submission" date="2007-04" db="EMBL/GenBank/DDBJ databases">
        <title>Complete sequence of Shewanella putrefaciens CN-32.</title>
        <authorList>
            <consortium name="US DOE Joint Genome Institute"/>
            <person name="Copeland A."/>
            <person name="Lucas S."/>
            <person name="Lapidus A."/>
            <person name="Barry K."/>
            <person name="Detter J.C."/>
            <person name="Glavina del Rio T."/>
            <person name="Hammon N."/>
            <person name="Israni S."/>
            <person name="Dalin E."/>
            <person name="Tice H."/>
            <person name="Pitluck S."/>
            <person name="Chain P."/>
            <person name="Malfatti S."/>
            <person name="Shin M."/>
            <person name="Vergez L."/>
            <person name="Schmutz J."/>
            <person name="Larimer F."/>
            <person name="Land M."/>
            <person name="Hauser L."/>
            <person name="Kyrpides N."/>
            <person name="Mikhailova N."/>
            <person name="Romine M.F."/>
            <person name="Fredrickson J."/>
            <person name="Tiedje J."/>
            <person name="Richardson P."/>
        </authorList>
    </citation>
    <scope>NUCLEOTIDE SEQUENCE [LARGE SCALE GENOMIC DNA]</scope>
    <source>
        <strain>CN-32 / ATCC BAA-453</strain>
    </source>
</reference>
<comment type="function">
    <text evidence="1">Involved in the gluconeogenesis. Catalyzes stereospecifically the conversion of dihydroxyacetone phosphate (DHAP) to D-glyceraldehyde-3-phosphate (G3P).</text>
</comment>
<comment type="catalytic activity">
    <reaction evidence="1">
        <text>D-glyceraldehyde 3-phosphate = dihydroxyacetone phosphate</text>
        <dbReference type="Rhea" id="RHEA:18585"/>
        <dbReference type="ChEBI" id="CHEBI:57642"/>
        <dbReference type="ChEBI" id="CHEBI:59776"/>
        <dbReference type="EC" id="5.3.1.1"/>
    </reaction>
</comment>
<comment type="pathway">
    <text evidence="1">Carbohydrate biosynthesis; gluconeogenesis.</text>
</comment>
<comment type="pathway">
    <text evidence="1">Carbohydrate degradation; glycolysis; D-glyceraldehyde 3-phosphate from glycerone phosphate: step 1/1.</text>
</comment>
<comment type="subunit">
    <text evidence="1">Homodimer.</text>
</comment>
<comment type="subcellular location">
    <subcellularLocation>
        <location evidence="1">Cytoplasm</location>
    </subcellularLocation>
</comment>
<comment type="similarity">
    <text evidence="1">Belongs to the triosephosphate isomerase family.</text>
</comment>
<sequence>MALRRPMVAGNWKMNGSAALAQELFKKFASKLQNDSAEVVLCPPSIYLESVRQLLEANKEALDGSLVRMGAQNLSQHDFGAYTGEVSGQMLKDSGCRYVIIGHSERRRMYGETSNIVAEKFAAAQKHGLTPILCVGESGPAREARRTFEVIAEELDIVIQKNGTMAFDNAIIAYEPLWAVGTGKSATPEQAQEVHAFIRKRLSEVSPFIGENIRILYGGSVTPSNAADLFAQPDVDGGLIGGASLNSSEFLSLCTIAMSA</sequence>
<accession>A4Y9C4</accession>
<keyword id="KW-0963">Cytoplasm</keyword>
<keyword id="KW-0312">Gluconeogenesis</keyword>
<keyword id="KW-0324">Glycolysis</keyword>
<keyword id="KW-0413">Isomerase</keyword>
<feature type="chain" id="PRO_1000009857" description="Triosephosphate isomerase">
    <location>
        <begin position="1"/>
        <end position="260"/>
    </location>
</feature>
<feature type="active site" description="Electrophile" evidence="1">
    <location>
        <position position="103"/>
    </location>
</feature>
<feature type="active site" description="Proton acceptor" evidence="1">
    <location>
        <position position="175"/>
    </location>
</feature>
<feature type="binding site" evidence="1">
    <location>
        <begin position="11"/>
        <end position="13"/>
    </location>
    <ligand>
        <name>substrate</name>
    </ligand>
</feature>
<feature type="binding site" evidence="1">
    <location>
        <position position="181"/>
    </location>
    <ligand>
        <name>substrate</name>
    </ligand>
</feature>
<feature type="binding site" evidence="1">
    <location>
        <position position="220"/>
    </location>
    <ligand>
        <name>substrate</name>
    </ligand>
</feature>
<feature type="binding site" evidence="1">
    <location>
        <begin position="241"/>
        <end position="242"/>
    </location>
    <ligand>
        <name>substrate</name>
    </ligand>
</feature>
<organism>
    <name type="scientific">Shewanella putrefaciens (strain CN-32 / ATCC BAA-453)</name>
    <dbReference type="NCBI Taxonomy" id="319224"/>
    <lineage>
        <taxon>Bacteria</taxon>
        <taxon>Pseudomonadati</taxon>
        <taxon>Pseudomonadota</taxon>
        <taxon>Gammaproteobacteria</taxon>
        <taxon>Alteromonadales</taxon>
        <taxon>Shewanellaceae</taxon>
        <taxon>Shewanella</taxon>
    </lineage>
</organism>
<evidence type="ECO:0000255" key="1">
    <source>
        <dbReference type="HAMAP-Rule" id="MF_00147"/>
    </source>
</evidence>
<protein>
    <recommendedName>
        <fullName evidence="1">Triosephosphate isomerase</fullName>
        <shortName evidence="1">TIM</shortName>
        <shortName evidence="1">TPI</shortName>
        <ecNumber evidence="1">5.3.1.1</ecNumber>
    </recommendedName>
    <alternativeName>
        <fullName evidence="1">Triose-phosphate isomerase</fullName>
    </alternativeName>
</protein>
<dbReference type="EC" id="5.3.1.1" evidence="1"/>
<dbReference type="EMBL" id="CP000681">
    <property type="protein sequence ID" value="ABP76557.1"/>
    <property type="molecule type" value="Genomic_DNA"/>
</dbReference>
<dbReference type="SMR" id="A4Y9C4"/>
<dbReference type="STRING" id="319224.Sputcn32_2838"/>
<dbReference type="KEGG" id="spc:Sputcn32_2838"/>
<dbReference type="eggNOG" id="COG0149">
    <property type="taxonomic scope" value="Bacteria"/>
</dbReference>
<dbReference type="HOGENOM" id="CLU_024251_2_1_6"/>
<dbReference type="UniPathway" id="UPA00109">
    <property type="reaction ID" value="UER00189"/>
</dbReference>
<dbReference type="UniPathway" id="UPA00138"/>
<dbReference type="GO" id="GO:0005829">
    <property type="term" value="C:cytosol"/>
    <property type="evidence" value="ECO:0007669"/>
    <property type="project" value="TreeGrafter"/>
</dbReference>
<dbReference type="GO" id="GO:0004807">
    <property type="term" value="F:triose-phosphate isomerase activity"/>
    <property type="evidence" value="ECO:0007669"/>
    <property type="project" value="UniProtKB-UniRule"/>
</dbReference>
<dbReference type="GO" id="GO:0006094">
    <property type="term" value="P:gluconeogenesis"/>
    <property type="evidence" value="ECO:0007669"/>
    <property type="project" value="UniProtKB-UniRule"/>
</dbReference>
<dbReference type="GO" id="GO:0046166">
    <property type="term" value="P:glyceraldehyde-3-phosphate biosynthetic process"/>
    <property type="evidence" value="ECO:0007669"/>
    <property type="project" value="TreeGrafter"/>
</dbReference>
<dbReference type="GO" id="GO:0019563">
    <property type="term" value="P:glycerol catabolic process"/>
    <property type="evidence" value="ECO:0007669"/>
    <property type="project" value="TreeGrafter"/>
</dbReference>
<dbReference type="GO" id="GO:0006096">
    <property type="term" value="P:glycolytic process"/>
    <property type="evidence" value="ECO:0007669"/>
    <property type="project" value="UniProtKB-UniRule"/>
</dbReference>
<dbReference type="CDD" id="cd00311">
    <property type="entry name" value="TIM"/>
    <property type="match status" value="1"/>
</dbReference>
<dbReference type="FunFam" id="3.20.20.70:FF:000016">
    <property type="entry name" value="Triosephosphate isomerase"/>
    <property type="match status" value="1"/>
</dbReference>
<dbReference type="Gene3D" id="3.20.20.70">
    <property type="entry name" value="Aldolase class I"/>
    <property type="match status" value="1"/>
</dbReference>
<dbReference type="HAMAP" id="MF_00147_B">
    <property type="entry name" value="TIM_B"/>
    <property type="match status" value="1"/>
</dbReference>
<dbReference type="InterPro" id="IPR013785">
    <property type="entry name" value="Aldolase_TIM"/>
</dbReference>
<dbReference type="InterPro" id="IPR035990">
    <property type="entry name" value="TIM_sf"/>
</dbReference>
<dbReference type="InterPro" id="IPR022896">
    <property type="entry name" value="TrioseP_Isoase_bac/euk"/>
</dbReference>
<dbReference type="InterPro" id="IPR000652">
    <property type="entry name" value="Triosephosphate_isomerase"/>
</dbReference>
<dbReference type="InterPro" id="IPR020861">
    <property type="entry name" value="Triosephosphate_isomerase_AS"/>
</dbReference>
<dbReference type="NCBIfam" id="TIGR00419">
    <property type="entry name" value="tim"/>
    <property type="match status" value="1"/>
</dbReference>
<dbReference type="PANTHER" id="PTHR21139">
    <property type="entry name" value="TRIOSEPHOSPHATE ISOMERASE"/>
    <property type="match status" value="1"/>
</dbReference>
<dbReference type="PANTHER" id="PTHR21139:SF42">
    <property type="entry name" value="TRIOSEPHOSPHATE ISOMERASE"/>
    <property type="match status" value="1"/>
</dbReference>
<dbReference type="Pfam" id="PF00121">
    <property type="entry name" value="TIM"/>
    <property type="match status" value="1"/>
</dbReference>
<dbReference type="SUPFAM" id="SSF51351">
    <property type="entry name" value="Triosephosphate isomerase (TIM)"/>
    <property type="match status" value="1"/>
</dbReference>
<dbReference type="PROSITE" id="PS00171">
    <property type="entry name" value="TIM_1"/>
    <property type="match status" value="1"/>
</dbReference>
<dbReference type="PROSITE" id="PS51440">
    <property type="entry name" value="TIM_2"/>
    <property type="match status" value="1"/>
</dbReference>
<proteinExistence type="inferred from homology"/>